<organism>
    <name type="scientific">Heliobacterium modesticaldum (strain ATCC 51547 / Ice1)</name>
    <dbReference type="NCBI Taxonomy" id="498761"/>
    <lineage>
        <taxon>Bacteria</taxon>
        <taxon>Bacillati</taxon>
        <taxon>Bacillota</taxon>
        <taxon>Clostridia</taxon>
        <taxon>Eubacteriales</taxon>
        <taxon>Heliobacteriaceae</taxon>
        <taxon>Heliomicrobium</taxon>
    </lineage>
</organism>
<dbReference type="EC" id="1.1.1.86" evidence="1"/>
<dbReference type="EMBL" id="CP000930">
    <property type="protein sequence ID" value="ABZ84085.1"/>
    <property type="molecule type" value="Genomic_DNA"/>
</dbReference>
<dbReference type="RefSeq" id="WP_012282599.1">
    <property type="nucleotide sequence ID" value="NC_010337.2"/>
</dbReference>
<dbReference type="SMR" id="B0TCQ9"/>
<dbReference type="STRING" id="498761.HM1_1513"/>
<dbReference type="KEGG" id="hmo:HM1_1513"/>
<dbReference type="eggNOG" id="COG0059">
    <property type="taxonomic scope" value="Bacteria"/>
</dbReference>
<dbReference type="HOGENOM" id="CLU_033821_0_1_9"/>
<dbReference type="OrthoDB" id="9804088at2"/>
<dbReference type="UniPathway" id="UPA00047">
    <property type="reaction ID" value="UER00056"/>
</dbReference>
<dbReference type="UniPathway" id="UPA00049">
    <property type="reaction ID" value="UER00060"/>
</dbReference>
<dbReference type="Proteomes" id="UP000008550">
    <property type="component" value="Chromosome"/>
</dbReference>
<dbReference type="GO" id="GO:0005829">
    <property type="term" value="C:cytosol"/>
    <property type="evidence" value="ECO:0007669"/>
    <property type="project" value="TreeGrafter"/>
</dbReference>
<dbReference type="GO" id="GO:0004455">
    <property type="term" value="F:ketol-acid reductoisomerase activity"/>
    <property type="evidence" value="ECO:0007669"/>
    <property type="project" value="UniProtKB-UniRule"/>
</dbReference>
<dbReference type="GO" id="GO:0000287">
    <property type="term" value="F:magnesium ion binding"/>
    <property type="evidence" value="ECO:0007669"/>
    <property type="project" value="UniProtKB-UniRule"/>
</dbReference>
<dbReference type="GO" id="GO:0050661">
    <property type="term" value="F:NADP binding"/>
    <property type="evidence" value="ECO:0007669"/>
    <property type="project" value="InterPro"/>
</dbReference>
<dbReference type="GO" id="GO:0009097">
    <property type="term" value="P:isoleucine biosynthetic process"/>
    <property type="evidence" value="ECO:0007669"/>
    <property type="project" value="UniProtKB-UniRule"/>
</dbReference>
<dbReference type="GO" id="GO:0009099">
    <property type="term" value="P:L-valine biosynthetic process"/>
    <property type="evidence" value="ECO:0007669"/>
    <property type="project" value="UniProtKB-UniRule"/>
</dbReference>
<dbReference type="FunFam" id="3.40.50.720:FF:000023">
    <property type="entry name" value="Ketol-acid reductoisomerase (NADP(+))"/>
    <property type="match status" value="1"/>
</dbReference>
<dbReference type="Gene3D" id="6.10.240.10">
    <property type="match status" value="1"/>
</dbReference>
<dbReference type="Gene3D" id="3.40.50.720">
    <property type="entry name" value="NAD(P)-binding Rossmann-like Domain"/>
    <property type="match status" value="1"/>
</dbReference>
<dbReference type="HAMAP" id="MF_00435">
    <property type="entry name" value="IlvC"/>
    <property type="match status" value="1"/>
</dbReference>
<dbReference type="InterPro" id="IPR008927">
    <property type="entry name" value="6-PGluconate_DH-like_C_sf"/>
</dbReference>
<dbReference type="InterPro" id="IPR013023">
    <property type="entry name" value="KARI"/>
</dbReference>
<dbReference type="InterPro" id="IPR000506">
    <property type="entry name" value="KARI_C"/>
</dbReference>
<dbReference type="InterPro" id="IPR013116">
    <property type="entry name" value="KARI_N"/>
</dbReference>
<dbReference type="InterPro" id="IPR014359">
    <property type="entry name" value="KARI_prok"/>
</dbReference>
<dbReference type="InterPro" id="IPR036291">
    <property type="entry name" value="NAD(P)-bd_dom_sf"/>
</dbReference>
<dbReference type="NCBIfam" id="TIGR00465">
    <property type="entry name" value="ilvC"/>
    <property type="match status" value="1"/>
</dbReference>
<dbReference type="NCBIfam" id="NF004017">
    <property type="entry name" value="PRK05479.1"/>
    <property type="match status" value="1"/>
</dbReference>
<dbReference type="NCBIfam" id="NF009940">
    <property type="entry name" value="PRK13403.1"/>
    <property type="match status" value="1"/>
</dbReference>
<dbReference type="PANTHER" id="PTHR21371">
    <property type="entry name" value="KETOL-ACID REDUCTOISOMERASE, MITOCHONDRIAL"/>
    <property type="match status" value="1"/>
</dbReference>
<dbReference type="PANTHER" id="PTHR21371:SF1">
    <property type="entry name" value="KETOL-ACID REDUCTOISOMERASE, MITOCHONDRIAL"/>
    <property type="match status" value="1"/>
</dbReference>
<dbReference type="Pfam" id="PF01450">
    <property type="entry name" value="KARI_C"/>
    <property type="match status" value="1"/>
</dbReference>
<dbReference type="Pfam" id="PF07991">
    <property type="entry name" value="KARI_N"/>
    <property type="match status" value="1"/>
</dbReference>
<dbReference type="PIRSF" id="PIRSF000116">
    <property type="entry name" value="IlvC_gammaproteo"/>
    <property type="match status" value="1"/>
</dbReference>
<dbReference type="SUPFAM" id="SSF48179">
    <property type="entry name" value="6-phosphogluconate dehydrogenase C-terminal domain-like"/>
    <property type="match status" value="1"/>
</dbReference>
<dbReference type="SUPFAM" id="SSF51735">
    <property type="entry name" value="NAD(P)-binding Rossmann-fold domains"/>
    <property type="match status" value="1"/>
</dbReference>
<dbReference type="PROSITE" id="PS51851">
    <property type="entry name" value="KARI_C"/>
    <property type="match status" value="1"/>
</dbReference>
<dbReference type="PROSITE" id="PS51850">
    <property type="entry name" value="KARI_N"/>
    <property type="match status" value="1"/>
</dbReference>
<keyword id="KW-0028">Amino-acid biosynthesis</keyword>
<keyword id="KW-0100">Branched-chain amino acid biosynthesis</keyword>
<keyword id="KW-0460">Magnesium</keyword>
<keyword id="KW-0479">Metal-binding</keyword>
<keyword id="KW-0521">NADP</keyword>
<keyword id="KW-0560">Oxidoreductase</keyword>
<keyword id="KW-1185">Reference proteome</keyword>
<comment type="function">
    <text evidence="1">Involved in the biosynthesis of branched-chain amino acids (BCAA). Catalyzes an alkyl-migration followed by a ketol-acid reduction of (S)-2-acetolactate (S2AL) to yield (R)-2,3-dihydroxy-isovalerate. In the isomerase reaction, S2AL is rearranged via a Mg-dependent methyl migration to produce 3-hydroxy-3-methyl-2-ketobutyrate (HMKB). In the reductase reaction, this 2-ketoacid undergoes a metal-dependent reduction by NADPH to yield (R)-2,3-dihydroxy-isovalerate.</text>
</comment>
<comment type="catalytic activity">
    <reaction evidence="1">
        <text>(2R)-2,3-dihydroxy-3-methylbutanoate + NADP(+) = (2S)-2-acetolactate + NADPH + H(+)</text>
        <dbReference type="Rhea" id="RHEA:22068"/>
        <dbReference type="ChEBI" id="CHEBI:15378"/>
        <dbReference type="ChEBI" id="CHEBI:49072"/>
        <dbReference type="ChEBI" id="CHEBI:57783"/>
        <dbReference type="ChEBI" id="CHEBI:58349"/>
        <dbReference type="ChEBI" id="CHEBI:58476"/>
        <dbReference type="EC" id="1.1.1.86"/>
    </reaction>
</comment>
<comment type="catalytic activity">
    <reaction evidence="1">
        <text>(2R,3R)-2,3-dihydroxy-3-methylpentanoate + NADP(+) = (S)-2-ethyl-2-hydroxy-3-oxobutanoate + NADPH + H(+)</text>
        <dbReference type="Rhea" id="RHEA:13493"/>
        <dbReference type="ChEBI" id="CHEBI:15378"/>
        <dbReference type="ChEBI" id="CHEBI:49256"/>
        <dbReference type="ChEBI" id="CHEBI:49258"/>
        <dbReference type="ChEBI" id="CHEBI:57783"/>
        <dbReference type="ChEBI" id="CHEBI:58349"/>
        <dbReference type="EC" id="1.1.1.86"/>
    </reaction>
</comment>
<comment type="cofactor">
    <cofactor evidence="1">
        <name>Mg(2+)</name>
        <dbReference type="ChEBI" id="CHEBI:18420"/>
    </cofactor>
    <text evidence="1">Binds 2 magnesium ions per subunit.</text>
</comment>
<comment type="pathway">
    <text evidence="1">Amino-acid biosynthesis; L-isoleucine biosynthesis; L-isoleucine from 2-oxobutanoate: step 2/4.</text>
</comment>
<comment type="pathway">
    <text evidence="1">Amino-acid biosynthesis; L-valine biosynthesis; L-valine from pyruvate: step 2/4.</text>
</comment>
<comment type="similarity">
    <text evidence="1">Belongs to the ketol-acid reductoisomerase family.</text>
</comment>
<sequence>MKMYYDADADLSLLEGKIVAVIGYGSQGHAQAQNLKDSGVNVIIGLRPDSNRVKEAQAYGFEVYSVAEAAAKADIIQILIPDEKQGKVYREEIAPYLTEGKALCFSHGFNIHFGQIQPPKNVDVFMVAPKSPGHMVRRMYTMGAGVPTLIAVYQDATGRAKDLALAYAKGTGGTRAGVIETTFREETETDLFGEQAVLCGGASALVKAGFETLVEAGYAPEMAYFECLHELKLIVDLMYEGGISWMRYSISDTAQWGDMNIGPRIITEETKKEMKKVLREIQEGTFAKEWLLENEVNRPKFNALAKADENHEIEIVGKKLRAMMPWLKTAK</sequence>
<reference key="1">
    <citation type="journal article" date="2008" name="J. Bacteriol.">
        <title>The genome of Heliobacterium modesticaldum, a phototrophic representative of the Firmicutes containing the simplest photosynthetic apparatus.</title>
        <authorList>
            <person name="Sattley W.M."/>
            <person name="Madigan M.T."/>
            <person name="Swingley W.D."/>
            <person name="Cheung P.C."/>
            <person name="Clocksin K.M."/>
            <person name="Conrad A.L."/>
            <person name="Dejesa L.C."/>
            <person name="Honchak B.M."/>
            <person name="Jung D.O."/>
            <person name="Karbach L.E."/>
            <person name="Kurdoglu A."/>
            <person name="Lahiri S."/>
            <person name="Mastrian S.D."/>
            <person name="Page L.E."/>
            <person name="Taylor H.L."/>
            <person name="Wang Z.T."/>
            <person name="Raymond J."/>
            <person name="Chen M."/>
            <person name="Blankenship R.E."/>
            <person name="Touchman J.W."/>
        </authorList>
    </citation>
    <scope>NUCLEOTIDE SEQUENCE [LARGE SCALE GENOMIC DNA]</scope>
    <source>
        <strain>ATCC 51547 / Ice1</strain>
    </source>
</reference>
<protein>
    <recommendedName>
        <fullName evidence="1">Ketol-acid reductoisomerase (NADP(+))</fullName>
        <shortName evidence="1">KARI</shortName>
        <ecNumber evidence="1">1.1.1.86</ecNumber>
    </recommendedName>
    <alternativeName>
        <fullName evidence="1">Acetohydroxy-acid isomeroreductase</fullName>
        <shortName evidence="1">AHIR</shortName>
    </alternativeName>
    <alternativeName>
        <fullName evidence="1">Alpha-keto-beta-hydroxylacyl reductoisomerase</fullName>
    </alternativeName>
    <alternativeName>
        <fullName evidence="1">Ketol-acid reductoisomerase type 1</fullName>
    </alternativeName>
    <alternativeName>
        <fullName evidence="1">Ketol-acid reductoisomerase type I</fullName>
    </alternativeName>
</protein>
<proteinExistence type="inferred from homology"/>
<name>ILVC_HELMI</name>
<gene>
    <name evidence="1" type="primary">ilvC</name>
    <name type="ordered locus">Helmi_14600</name>
    <name type="ORF">HM1_1513</name>
</gene>
<evidence type="ECO:0000255" key="1">
    <source>
        <dbReference type="HAMAP-Rule" id="MF_00435"/>
    </source>
</evidence>
<evidence type="ECO:0000255" key="2">
    <source>
        <dbReference type="PROSITE-ProRule" id="PRU01197"/>
    </source>
</evidence>
<evidence type="ECO:0000255" key="3">
    <source>
        <dbReference type="PROSITE-ProRule" id="PRU01198"/>
    </source>
</evidence>
<accession>B0TCQ9</accession>
<feature type="chain" id="PRO_1000124296" description="Ketol-acid reductoisomerase (NADP(+))">
    <location>
        <begin position="1"/>
        <end position="331"/>
    </location>
</feature>
<feature type="domain" description="KARI N-terminal Rossmann" evidence="2">
    <location>
        <begin position="1"/>
        <end position="181"/>
    </location>
</feature>
<feature type="domain" description="KARI C-terminal knotted" evidence="3">
    <location>
        <begin position="182"/>
        <end position="327"/>
    </location>
</feature>
<feature type="active site" evidence="1">
    <location>
        <position position="107"/>
    </location>
</feature>
<feature type="binding site" evidence="1">
    <location>
        <begin position="24"/>
        <end position="27"/>
    </location>
    <ligand>
        <name>NADP(+)</name>
        <dbReference type="ChEBI" id="CHEBI:58349"/>
    </ligand>
</feature>
<feature type="binding site" evidence="1">
    <location>
        <position position="47"/>
    </location>
    <ligand>
        <name>NADP(+)</name>
        <dbReference type="ChEBI" id="CHEBI:58349"/>
    </ligand>
</feature>
<feature type="binding site" evidence="1">
    <location>
        <position position="50"/>
    </location>
    <ligand>
        <name>NADP(+)</name>
        <dbReference type="ChEBI" id="CHEBI:58349"/>
    </ligand>
</feature>
<feature type="binding site" evidence="1">
    <location>
        <begin position="82"/>
        <end position="85"/>
    </location>
    <ligand>
        <name>NADP(+)</name>
        <dbReference type="ChEBI" id="CHEBI:58349"/>
    </ligand>
</feature>
<feature type="binding site" evidence="1">
    <location>
        <position position="133"/>
    </location>
    <ligand>
        <name>NADP(+)</name>
        <dbReference type="ChEBI" id="CHEBI:58349"/>
    </ligand>
</feature>
<feature type="binding site" evidence="1">
    <location>
        <position position="190"/>
    </location>
    <ligand>
        <name>Mg(2+)</name>
        <dbReference type="ChEBI" id="CHEBI:18420"/>
        <label>1</label>
    </ligand>
</feature>
<feature type="binding site" evidence="1">
    <location>
        <position position="190"/>
    </location>
    <ligand>
        <name>Mg(2+)</name>
        <dbReference type="ChEBI" id="CHEBI:18420"/>
        <label>2</label>
    </ligand>
</feature>
<feature type="binding site" evidence="1">
    <location>
        <position position="194"/>
    </location>
    <ligand>
        <name>Mg(2+)</name>
        <dbReference type="ChEBI" id="CHEBI:18420"/>
        <label>1</label>
    </ligand>
</feature>
<feature type="binding site" evidence="1">
    <location>
        <position position="226"/>
    </location>
    <ligand>
        <name>Mg(2+)</name>
        <dbReference type="ChEBI" id="CHEBI:18420"/>
        <label>2</label>
    </ligand>
</feature>
<feature type="binding site" evidence="1">
    <location>
        <position position="230"/>
    </location>
    <ligand>
        <name>Mg(2+)</name>
        <dbReference type="ChEBI" id="CHEBI:18420"/>
        <label>2</label>
    </ligand>
</feature>
<feature type="binding site" evidence="1">
    <location>
        <position position="251"/>
    </location>
    <ligand>
        <name>substrate</name>
    </ligand>
</feature>